<name>RS9_CHLL3</name>
<sequence>MKEVIDTVGRRKTSVARVFMTPGKGRVIINKLPVEEYFRDEVKRLHALRPLVLTEKTEDFDIKVNVKGGGLSGQSGAVSLGIARALTEFDEAARAVLKQERLLTRDPRMVERKKFGRKKARKSFQFSKR</sequence>
<feature type="chain" id="PRO_1000051279" description="Small ribosomal subunit protein uS9">
    <location>
        <begin position="1"/>
        <end position="129"/>
    </location>
</feature>
<accession>Q3B5U1</accession>
<comment type="similarity">
    <text evidence="1">Belongs to the universal ribosomal protein uS9 family.</text>
</comment>
<proteinExistence type="inferred from homology"/>
<reference key="1">
    <citation type="submission" date="2005-08" db="EMBL/GenBank/DDBJ databases">
        <title>Complete sequence of Pelodictyon luteolum DSM 273.</title>
        <authorList>
            <consortium name="US DOE Joint Genome Institute"/>
            <person name="Copeland A."/>
            <person name="Lucas S."/>
            <person name="Lapidus A."/>
            <person name="Barry K."/>
            <person name="Detter J.C."/>
            <person name="Glavina T."/>
            <person name="Hammon N."/>
            <person name="Israni S."/>
            <person name="Pitluck S."/>
            <person name="Bryant D."/>
            <person name="Schmutz J."/>
            <person name="Larimer F."/>
            <person name="Land M."/>
            <person name="Kyrpides N."/>
            <person name="Ivanova N."/>
            <person name="Richardson P."/>
        </authorList>
    </citation>
    <scope>NUCLEOTIDE SEQUENCE [LARGE SCALE GENOMIC DNA]</scope>
    <source>
        <strain>DSM 273 / BCRC 81028 / 2530</strain>
    </source>
</reference>
<dbReference type="EMBL" id="CP000096">
    <property type="protein sequence ID" value="ABB23290.1"/>
    <property type="molecule type" value="Genomic_DNA"/>
</dbReference>
<dbReference type="RefSeq" id="WP_011357165.1">
    <property type="nucleotide sequence ID" value="NC_007512.1"/>
</dbReference>
<dbReference type="SMR" id="Q3B5U1"/>
<dbReference type="STRING" id="319225.Plut_0402"/>
<dbReference type="KEGG" id="plt:Plut_0402"/>
<dbReference type="eggNOG" id="COG0103">
    <property type="taxonomic scope" value="Bacteria"/>
</dbReference>
<dbReference type="HOGENOM" id="CLU_046483_2_1_10"/>
<dbReference type="OrthoDB" id="9803965at2"/>
<dbReference type="Proteomes" id="UP000002709">
    <property type="component" value="Chromosome"/>
</dbReference>
<dbReference type="GO" id="GO:0005737">
    <property type="term" value="C:cytoplasm"/>
    <property type="evidence" value="ECO:0007669"/>
    <property type="project" value="UniProtKB-ARBA"/>
</dbReference>
<dbReference type="GO" id="GO:0015935">
    <property type="term" value="C:small ribosomal subunit"/>
    <property type="evidence" value="ECO:0007669"/>
    <property type="project" value="TreeGrafter"/>
</dbReference>
<dbReference type="GO" id="GO:0003723">
    <property type="term" value="F:RNA binding"/>
    <property type="evidence" value="ECO:0007669"/>
    <property type="project" value="TreeGrafter"/>
</dbReference>
<dbReference type="GO" id="GO:0003735">
    <property type="term" value="F:structural constituent of ribosome"/>
    <property type="evidence" value="ECO:0007669"/>
    <property type="project" value="InterPro"/>
</dbReference>
<dbReference type="GO" id="GO:0006412">
    <property type="term" value="P:translation"/>
    <property type="evidence" value="ECO:0007669"/>
    <property type="project" value="UniProtKB-UniRule"/>
</dbReference>
<dbReference type="FunFam" id="3.30.230.10:FF:000001">
    <property type="entry name" value="30S ribosomal protein S9"/>
    <property type="match status" value="1"/>
</dbReference>
<dbReference type="Gene3D" id="3.30.230.10">
    <property type="match status" value="1"/>
</dbReference>
<dbReference type="HAMAP" id="MF_00532_B">
    <property type="entry name" value="Ribosomal_uS9_B"/>
    <property type="match status" value="1"/>
</dbReference>
<dbReference type="InterPro" id="IPR020568">
    <property type="entry name" value="Ribosomal_Su5_D2-typ_SF"/>
</dbReference>
<dbReference type="InterPro" id="IPR000754">
    <property type="entry name" value="Ribosomal_uS9"/>
</dbReference>
<dbReference type="InterPro" id="IPR023035">
    <property type="entry name" value="Ribosomal_uS9_bac/plastid"/>
</dbReference>
<dbReference type="InterPro" id="IPR020574">
    <property type="entry name" value="Ribosomal_uS9_CS"/>
</dbReference>
<dbReference type="InterPro" id="IPR014721">
    <property type="entry name" value="Ribsml_uS5_D2-typ_fold_subgr"/>
</dbReference>
<dbReference type="NCBIfam" id="NF001099">
    <property type="entry name" value="PRK00132.1"/>
    <property type="match status" value="1"/>
</dbReference>
<dbReference type="PANTHER" id="PTHR21569">
    <property type="entry name" value="RIBOSOMAL PROTEIN S9"/>
    <property type="match status" value="1"/>
</dbReference>
<dbReference type="PANTHER" id="PTHR21569:SF1">
    <property type="entry name" value="SMALL RIBOSOMAL SUBUNIT PROTEIN US9M"/>
    <property type="match status" value="1"/>
</dbReference>
<dbReference type="Pfam" id="PF00380">
    <property type="entry name" value="Ribosomal_S9"/>
    <property type="match status" value="1"/>
</dbReference>
<dbReference type="SUPFAM" id="SSF54211">
    <property type="entry name" value="Ribosomal protein S5 domain 2-like"/>
    <property type="match status" value="1"/>
</dbReference>
<dbReference type="PROSITE" id="PS00360">
    <property type="entry name" value="RIBOSOMAL_S9"/>
    <property type="match status" value="1"/>
</dbReference>
<protein>
    <recommendedName>
        <fullName evidence="1">Small ribosomal subunit protein uS9</fullName>
    </recommendedName>
    <alternativeName>
        <fullName evidence="2">30S ribosomal protein S9</fullName>
    </alternativeName>
</protein>
<keyword id="KW-1185">Reference proteome</keyword>
<keyword id="KW-0687">Ribonucleoprotein</keyword>
<keyword id="KW-0689">Ribosomal protein</keyword>
<evidence type="ECO:0000255" key="1">
    <source>
        <dbReference type="HAMAP-Rule" id="MF_00532"/>
    </source>
</evidence>
<evidence type="ECO:0000305" key="2"/>
<gene>
    <name evidence="1" type="primary">rpsI</name>
    <name type="ordered locus">Plut_0402</name>
</gene>
<organism>
    <name type="scientific">Chlorobium luteolum (strain DSM 273 / BCRC 81028 / 2530)</name>
    <name type="common">Pelodictyon luteolum</name>
    <dbReference type="NCBI Taxonomy" id="319225"/>
    <lineage>
        <taxon>Bacteria</taxon>
        <taxon>Pseudomonadati</taxon>
        <taxon>Chlorobiota</taxon>
        <taxon>Chlorobiia</taxon>
        <taxon>Chlorobiales</taxon>
        <taxon>Chlorobiaceae</taxon>
        <taxon>Chlorobium/Pelodictyon group</taxon>
        <taxon>Pelodictyon</taxon>
    </lineage>
</organism>